<accession>B7M106</accession>
<gene>
    <name evidence="1" type="primary">rplO</name>
    <name type="ordered locus">ECIAI1_3450</name>
</gene>
<name>RL15_ECO8A</name>
<comment type="function">
    <text evidence="1">Binds to the 23S rRNA.</text>
</comment>
<comment type="subunit">
    <text evidence="1">Part of the 50S ribosomal subunit.</text>
</comment>
<comment type="similarity">
    <text evidence="1">Belongs to the universal ribosomal protein uL15 family.</text>
</comment>
<keyword id="KW-0687">Ribonucleoprotein</keyword>
<keyword id="KW-0689">Ribosomal protein</keyword>
<keyword id="KW-0694">RNA-binding</keyword>
<keyword id="KW-0699">rRNA-binding</keyword>
<feature type="chain" id="PRO_1000142813" description="Large ribosomal subunit protein uL15">
    <location>
        <begin position="1"/>
        <end position="144"/>
    </location>
</feature>
<feature type="region of interest" description="Disordered" evidence="2">
    <location>
        <begin position="1"/>
        <end position="54"/>
    </location>
</feature>
<feature type="compositionally biased region" description="Gly residues" evidence="2">
    <location>
        <begin position="21"/>
        <end position="31"/>
    </location>
</feature>
<sequence>MRLNTLSPAEGSKKAGKRLGRGIGSGLGKTGGRGHKGQKSRSGGGVRRGFEGGQMPLYRRLPKFGFTSRKAAITAEVRLSDLAKVEGGVVDLNTLKAANIIGIQIEFAKVILAGEVTTPVTVRGLRVTKGARAAIEAAGGKIEE</sequence>
<organism>
    <name type="scientific">Escherichia coli O8 (strain IAI1)</name>
    <dbReference type="NCBI Taxonomy" id="585034"/>
    <lineage>
        <taxon>Bacteria</taxon>
        <taxon>Pseudomonadati</taxon>
        <taxon>Pseudomonadota</taxon>
        <taxon>Gammaproteobacteria</taxon>
        <taxon>Enterobacterales</taxon>
        <taxon>Enterobacteriaceae</taxon>
        <taxon>Escherichia</taxon>
    </lineage>
</organism>
<proteinExistence type="inferred from homology"/>
<protein>
    <recommendedName>
        <fullName evidence="1">Large ribosomal subunit protein uL15</fullName>
    </recommendedName>
    <alternativeName>
        <fullName evidence="3">50S ribosomal protein L15</fullName>
    </alternativeName>
</protein>
<reference key="1">
    <citation type="journal article" date="2009" name="PLoS Genet.">
        <title>Organised genome dynamics in the Escherichia coli species results in highly diverse adaptive paths.</title>
        <authorList>
            <person name="Touchon M."/>
            <person name="Hoede C."/>
            <person name="Tenaillon O."/>
            <person name="Barbe V."/>
            <person name="Baeriswyl S."/>
            <person name="Bidet P."/>
            <person name="Bingen E."/>
            <person name="Bonacorsi S."/>
            <person name="Bouchier C."/>
            <person name="Bouvet O."/>
            <person name="Calteau A."/>
            <person name="Chiapello H."/>
            <person name="Clermont O."/>
            <person name="Cruveiller S."/>
            <person name="Danchin A."/>
            <person name="Diard M."/>
            <person name="Dossat C."/>
            <person name="Karoui M.E."/>
            <person name="Frapy E."/>
            <person name="Garry L."/>
            <person name="Ghigo J.M."/>
            <person name="Gilles A.M."/>
            <person name="Johnson J."/>
            <person name="Le Bouguenec C."/>
            <person name="Lescat M."/>
            <person name="Mangenot S."/>
            <person name="Martinez-Jehanne V."/>
            <person name="Matic I."/>
            <person name="Nassif X."/>
            <person name="Oztas S."/>
            <person name="Petit M.A."/>
            <person name="Pichon C."/>
            <person name="Rouy Z."/>
            <person name="Ruf C.S."/>
            <person name="Schneider D."/>
            <person name="Tourret J."/>
            <person name="Vacherie B."/>
            <person name="Vallenet D."/>
            <person name="Medigue C."/>
            <person name="Rocha E.P.C."/>
            <person name="Denamur E."/>
        </authorList>
    </citation>
    <scope>NUCLEOTIDE SEQUENCE [LARGE SCALE GENOMIC DNA]</scope>
    <source>
        <strain>IAI1</strain>
    </source>
</reference>
<dbReference type="EMBL" id="CU928160">
    <property type="protein sequence ID" value="CAR00252.1"/>
    <property type="molecule type" value="Genomic_DNA"/>
</dbReference>
<dbReference type="RefSeq" id="WP_001238917.1">
    <property type="nucleotide sequence ID" value="NC_011741.1"/>
</dbReference>
<dbReference type="SMR" id="B7M106"/>
<dbReference type="GeneID" id="93778686"/>
<dbReference type="KEGG" id="ecr:ECIAI1_3450"/>
<dbReference type="HOGENOM" id="CLU_055188_4_2_6"/>
<dbReference type="GO" id="GO:0022625">
    <property type="term" value="C:cytosolic large ribosomal subunit"/>
    <property type="evidence" value="ECO:0007669"/>
    <property type="project" value="TreeGrafter"/>
</dbReference>
<dbReference type="GO" id="GO:0019843">
    <property type="term" value="F:rRNA binding"/>
    <property type="evidence" value="ECO:0007669"/>
    <property type="project" value="UniProtKB-UniRule"/>
</dbReference>
<dbReference type="GO" id="GO:0003735">
    <property type="term" value="F:structural constituent of ribosome"/>
    <property type="evidence" value="ECO:0007669"/>
    <property type="project" value="InterPro"/>
</dbReference>
<dbReference type="GO" id="GO:0006412">
    <property type="term" value="P:translation"/>
    <property type="evidence" value="ECO:0007669"/>
    <property type="project" value="UniProtKB-UniRule"/>
</dbReference>
<dbReference type="FunFam" id="3.100.10.10:FF:000003">
    <property type="entry name" value="50S ribosomal protein L15"/>
    <property type="match status" value="1"/>
</dbReference>
<dbReference type="Gene3D" id="3.100.10.10">
    <property type="match status" value="1"/>
</dbReference>
<dbReference type="HAMAP" id="MF_01341">
    <property type="entry name" value="Ribosomal_uL15"/>
    <property type="match status" value="1"/>
</dbReference>
<dbReference type="InterPro" id="IPR030878">
    <property type="entry name" value="Ribosomal_uL15"/>
</dbReference>
<dbReference type="InterPro" id="IPR021131">
    <property type="entry name" value="Ribosomal_uL15/eL18"/>
</dbReference>
<dbReference type="InterPro" id="IPR036227">
    <property type="entry name" value="Ribosomal_uL15/eL18_sf"/>
</dbReference>
<dbReference type="InterPro" id="IPR005749">
    <property type="entry name" value="Ribosomal_uL15_bac-type"/>
</dbReference>
<dbReference type="InterPro" id="IPR001196">
    <property type="entry name" value="Ribosomal_uL15_CS"/>
</dbReference>
<dbReference type="NCBIfam" id="TIGR01071">
    <property type="entry name" value="rplO_bact"/>
    <property type="match status" value="1"/>
</dbReference>
<dbReference type="PANTHER" id="PTHR12934">
    <property type="entry name" value="50S RIBOSOMAL PROTEIN L15"/>
    <property type="match status" value="1"/>
</dbReference>
<dbReference type="PANTHER" id="PTHR12934:SF11">
    <property type="entry name" value="LARGE RIBOSOMAL SUBUNIT PROTEIN UL15M"/>
    <property type="match status" value="1"/>
</dbReference>
<dbReference type="Pfam" id="PF00828">
    <property type="entry name" value="Ribosomal_L27A"/>
    <property type="match status" value="1"/>
</dbReference>
<dbReference type="SUPFAM" id="SSF52080">
    <property type="entry name" value="Ribosomal proteins L15p and L18e"/>
    <property type="match status" value="1"/>
</dbReference>
<dbReference type="PROSITE" id="PS00475">
    <property type="entry name" value="RIBOSOMAL_L15"/>
    <property type="match status" value="1"/>
</dbReference>
<evidence type="ECO:0000255" key="1">
    <source>
        <dbReference type="HAMAP-Rule" id="MF_01341"/>
    </source>
</evidence>
<evidence type="ECO:0000256" key="2">
    <source>
        <dbReference type="SAM" id="MobiDB-lite"/>
    </source>
</evidence>
<evidence type="ECO:0000305" key="3"/>